<protein>
    <recommendedName>
        <fullName evidence="1">2-C-methyl-D-erythritol 2,4-cyclodiphosphate synthase</fullName>
        <shortName evidence="1">MECDP-synthase</shortName>
        <shortName evidence="1">MECPP-synthase</shortName>
        <shortName evidence="1">MECPS</shortName>
        <ecNumber evidence="1">4.6.1.12</ecNumber>
    </recommendedName>
</protein>
<keyword id="KW-0414">Isoprene biosynthesis</keyword>
<keyword id="KW-0456">Lyase</keyword>
<keyword id="KW-0479">Metal-binding</keyword>
<accession>Q7W5D0</accession>
<proteinExistence type="inferred from homology"/>
<evidence type="ECO:0000255" key="1">
    <source>
        <dbReference type="HAMAP-Rule" id="MF_00107"/>
    </source>
</evidence>
<comment type="function">
    <text evidence="1">Involved in the biosynthesis of isopentenyl diphosphate (IPP) and dimethylallyl diphosphate (DMAPP), two major building blocks of isoprenoid compounds. Catalyzes the conversion of 4-diphosphocytidyl-2-C-methyl-D-erythritol 2-phosphate (CDP-ME2P) to 2-C-methyl-D-erythritol 2,4-cyclodiphosphate (ME-CPP) with a corresponding release of cytidine 5-monophosphate (CMP).</text>
</comment>
<comment type="catalytic activity">
    <reaction evidence="1">
        <text>4-CDP-2-C-methyl-D-erythritol 2-phosphate = 2-C-methyl-D-erythritol 2,4-cyclic diphosphate + CMP</text>
        <dbReference type="Rhea" id="RHEA:23864"/>
        <dbReference type="ChEBI" id="CHEBI:57919"/>
        <dbReference type="ChEBI" id="CHEBI:58483"/>
        <dbReference type="ChEBI" id="CHEBI:60377"/>
        <dbReference type="EC" id="4.6.1.12"/>
    </reaction>
</comment>
<comment type="cofactor">
    <cofactor evidence="1">
        <name>a divalent metal cation</name>
        <dbReference type="ChEBI" id="CHEBI:60240"/>
    </cofactor>
    <text evidence="1">Binds 1 divalent metal cation per subunit.</text>
</comment>
<comment type="pathway">
    <text evidence="1">Isoprenoid biosynthesis; isopentenyl diphosphate biosynthesis via DXP pathway; isopentenyl diphosphate from 1-deoxy-D-xylulose 5-phosphate: step 4/6.</text>
</comment>
<comment type="subunit">
    <text evidence="1">Homotrimer.</text>
</comment>
<comment type="similarity">
    <text evidence="1">Belongs to the IspF family.</text>
</comment>
<reference key="1">
    <citation type="journal article" date="2003" name="Nat. Genet.">
        <title>Comparative analysis of the genome sequences of Bordetella pertussis, Bordetella parapertussis and Bordetella bronchiseptica.</title>
        <authorList>
            <person name="Parkhill J."/>
            <person name="Sebaihia M."/>
            <person name="Preston A."/>
            <person name="Murphy L.D."/>
            <person name="Thomson N.R."/>
            <person name="Harris D.E."/>
            <person name="Holden M.T.G."/>
            <person name="Churcher C.M."/>
            <person name="Bentley S.D."/>
            <person name="Mungall K.L."/>
            <person name="Cerdeno-Tarraga A.-M."/>
            <person name="Temple L."/>
            <person name="James K.D."/>
            <person name="Harris B."/>
            <person name="Quail M.A."/>
            <person name="Achtman M."/>
            <person name="Atkin R."/>
            <person name="Baker S."/>
            <person name="Basham D."/>
            <person name="Bason N."/>
            <person name="Cherevach I."/>
            <person name="Chillingworth T."/>
            <person name="Collins M."/>
            <person name="Cronin A."/>
            <person name="Davis P."/>
            <person name="Doggett J."/>
            <person name="Feltwell T."/>
            <person name="Goble A."/>
            <person name="Hamlin N."/>
            <person name="Hauser H."/>
            <person name="Holroyd S."/>
            <person name="Jagels K."/>
            <person name="Leather S."/>
            <person name="Moule S."/>
            <person name="Norberczak H."/>
            <person name="O'Neil S."/>
            <person name="Ormond D."/>
            <person name="Price C."/>
            <person name="Rabbinowitsch E."/>
            <person name="Rutter S."/>
            <person name="Sanders M."/>
            <person name="Saunders D."/>
            <person name="Seeger K."/>
            <person name="Sharp S."/>
            <person name="Simmonds M."/>
            <person name="Skelton J."/>
            <person name="Squares R."/>
            <person name="Squares S."/>
            <person name="Stevens K."/>
            <person name="Unwin L."/>
            <person name="Whitehead S."/>
            <person name="Barrell B.G."/>
            <person name="Maskell D.J."/>
        </authorList>
    </citation>
    <scope>NUCLEOTIDE SEQUENCE [LARGE SCALE GENOMIC DNA]</scope>
    <source>
        <strain>12822 / ATCC BAA-587 / NCTC 13253</strain>
    </source>
</reference>
<dbReference type="EC" id="4.6.1.12" evidence="1"/>
<dbReference type="EMBL" id="BX640433">
    <property type="protein sequence ID" value="CAE38650.1"/>
    <property type="molecule type" value="Genomic_DNA"/>
</dbReference>
<dbReference type="RefSeq" id="WP_003813893.1">
    <property type="nucleotide sequence ID" value="NC_002928.3"/>
</dbReference>
<dbReference type="SMR" id="Q7W5D0"/>
<dbReference type="GeneID" id="93205148"/>
<dbReference type="KEGG" id="bpa:BPP3365"/>
<dbReference type="HOGENOM" id="CLU_084630_2_0_4"/>
<dbReference type="UniPathway" id="UPA00056">
    <property type="reaction ID" value="UER00095"/>
</dbReference>
<dbReference type="Proteomes" id="UP000001421">
    <property type="component" value="Chromosome"/>
</dbReference>
<dbReference type="GO" id="GO:0008685">
    <property type="term" value="F:2-C-methyl-D-erythritol 2,4-cyclodiphosphate synthase activity"/>
    <property type="evidence" value="ECO:0007669"/>
    <property type="project" value="UniProtKB-UniRule"/>
</dbReference>
<dbReference type="GO" id="GO:0046872">
    <property type="term" value="F:metal ion binding"/>
    <property type="evidence" value="ECO:0007669"/>
    <property type="project" value="UniProtKB-KW"/>
</dbReference>
<dbReference type="GO" id="GO:0019288">
    <property type="term" value="P:isopentenyl diphosphate biosynthetic process, methylerythritol 4-phosphate pathway"/>
    <property type="evidence" value="ECO:0007669"/>
    <property type="project" value="UniProtKB-UniRule"/>
</dbReference>
<dbReference type="GO" id="GO:0016114">
    <property type="term" value="P:terpenoid biosynthetic process"/>
    <property type="evidence" value="ECO:0007669"/>
    <property type="project" value="InterPro"/>
</dbReference>
<dbReference type="CDD" id="cd00554">
    <property type="entry name" value="MECDP_synthase"/>
    <property type="match status" value="1"/>
</dbReference>
<dbReference type="FunFam" id="3.30.1330.50:FF:000001">
    <property type="entry name" value="2-C-methyl-D-erythritol 2,4-cyclodiphosphate synthase"/>
    <property type="match status" value="1"/>
</dbReference>
<dbReference type="Gene3D" id="3.30.1330.50">
    <property type="entry name" value="2-C-methyl-D-erythritol 2,4-cyclodiphosphate synthase"/>
    <property type="match status" value="1"/>
</dbReference>
<dbReference type="HAMAP" id="MF_00107">
    <property type="entry name" value="IspF"/>
    <property type="match status" value="1"/>
</dbReference>
<dbReference type="InterPro" id="IPR003526">
    <property type="entry name" value="MECDP_synthase"/>
</dbReference>
<dbReference type="InterPro" id="IPR020555">
    <property type="entry name" value="MECDP_synthase_CS"/>
</dbReference>
<dbReference type="InterPro" id="IPR036571">
    <property type="entry name" value="MECDP_synthase_sf"/>
</dbReference>
<dbReference type="NCBIfam" id="TIGR00151">
    <property type="entry name" value="ispF"/>
    <property type="match status" value="1"/>
</dbReference>
<dbReference type="PANTHER" id="PTHR43181">
    <property type="entry name" value="2-C-METHYL-D-ERYTHRITOL 2,4-CYCLODIPHOSPHATE SYNTHASE, CHLOROPLASTIC"/>
    <property type="match status" value="1"/>
</dbReference>
<dbReference type="PANTHER" id="PTHR43181:SF1">
    <property type="entry name" value="2-C-METHYL-D-ERYTHRITOL 2,4-CYCLODIPHOSPHATE SYNTHASE, CHLOROPLASTIC"/>
    <property type="match status" value="1"/>
</dbReference>
<dbReference type="Pfam" id="PF02542">
    <property type="entry name" value="YgbB"/>
    <property type="match status" value="1"/>
</dbReference>
<dbReference type="SUPFAM" id="SSF69765">
    <property type="entry name" value="IpsF-like"/>
    <property type="match status" value="1"/>
</dbReference>
<dbReference type="PROSITE" id="PS01350">
    <property type="entry name" value="ISPF"/>
    <property type="match status" value="1"/>
</dbReference>
<organism>
    <name type="scientific">Bordetella parapertussis (strain 12822 / ATCC BAA-587 / NCTC 13253)</name>
    <dbReference type="NCBI Taxonomy" id="257311"/>
    <lineage>
        <taxon>Bacteria</taxon>
        <taxon>Pseudomonadati</taxon>
        <taxon>Pseudomonadota</taxon>
        <taxon>Betaproteobacteria</taxon>
        <taxon>Burkholderiales</taxon>
        <taxon>Alcaligenaceae</taxon>
        <taxon>Bordetella</taxon>
    </lineage>
</organism>
<sequence>MNIPFRVGQGFDVHALVEGRPLIIGGVTIAHTHGLLGHSDADVLLHAVTDALLGGAGLGDIGRHFPDTDPAYRGADSRVLLRAAFDKVRAAGWAPVNVDATIHAQAPKIGPHAAAMVANIAADLALDAGAVNIKAKTNEGLGYLGRKEGIAANVVVLLARAG</sequence>
<feature type="chain" id="PRO_0000189445" description="2-C-methyl-D-erythritol 2,4-cyclodiphosphate synthase">
    <location>
        <begin position="1"/>
        <end position="162"/>
    </location>
</feature>
<feature type="binding site" evidence="1">
    <location>
        <begin position="12"/>
        <end position="14"/>
    </location>
    <ligand>
        <name>4-CDP-2-C-methyl-D-erythritol 2-phosphate</name>
        <dbReference type="ChEBI" id="CHEBI:57919"/>
    </ligand>
</feature>
<feature type="binding site" evidence="1">
    <location>
        <position position="12"/>
    </location>
    <ligand>
        <name>a divalent metal cation</name>
        <dbReference type="ChEBI" id="CHEBI:60240"/>
    </ligand>
</feature>
<feature type="binding site" evidence="1">
    <location>
        <position position="14"/>
    </location>
    <ligand>
        <name>a divalent metal cation</name>
        <dbReference type="ChEBI" id="CHEBI:60240"/>
    </ligand>
</feature>
<feature type="binding site" evidence="1">
    <location>
        <begin position="38"/>
        <end position="39"/>
    </location>
    <ligand>
        <name>4-CDP-2-C-methyl-D-erythritol 2-phosphate</name>
        <dbReference type="ChEBI" id="CHEBI:57919"/>
    </ligand>
</feature>
<feature type="binding site" evidence="1">
    <location>
        <position position="46"/>
    </location>
    <ligand>
        <name>a divalent metal cation</name>
        <dbReference type="ChEBI" id="CHEBI:60240"/>
    </ligand>
</feature>
<feature type="binding site" evidence="1">
    <location>
        <begin position="60"/>
        <end position="62"/>
    </location>
    <ligand>
        <name>4-CDP-2-C-methyl-D-erythritol 2-phosphate</name>
        <dbReference type="ChEBI" id="CHEBI:57919"/>
    </ligand>
</feature>
<feature type="binding site" evidence="1">
    <location>
        <begin position="65"/>
        <end position="69"/>
    </location>
    <ligand>
        <name>4-CDP-2-C-methyl-D-erythritol 2-phosphate</name>
        <dbReference type="ChEBI" id="CHEBI:57919"/>
    </ligand>
</feature>
<feature type="binding site" evidence="1">
    <location>
        <position position="146"/>
    </location>
    <ligand>
        <name>4-CDP-2-C-methyl-D-erythritol 2-phosphate</name>
        <dbReference type="ChEBI" id="CHEBI:57919"/>
    </ligand>
</feature>
<feature type="site" description="Transition state stabilizer" evidence="1">
    <location>
        <position position="38"/>
    </location>
</feature>
<feature type="site" description="Transition state stabilizer" evidence="1">
    <location>
        <position position="137"/>
    </location>
</feature>
<name>ISPF_BORPA</name>
<gene>
    <name evidence="1" type="primary">ispF</name>
    <name type="synonym">mecS</name>
    <name type="ordered locus">BPP3365</name>
</gene>